<sequence length="283" mass="30834">MIARILDGRTCAEKVKARVKENIRLLQEKGLPSPGLAVILVGNDPASATYVAHKERACQAVGIRSTVYRMPNTITESELASKIDECNRDSNTHGILLQLPLPAHIDPANLLERIRPDKDVDGFHPYNLGRLVQRRPALRPCTPYGVMTLLTETHENLEGKHAVIIGASNIVGRPMALELLLAKCTVTVCHRFTRDLAEHVKSAELLIVAIGKPGIIQSEWIKPGAIVIDVGFSRLSPNKIAGDIDFETAKERASWITPVPGGVGPMTVATLLENTLQAAQTFL</sequence>
<keyword id="KW-0028">Amino-acid biosynthesis</keyword>
<keyword id="KW-0368">Histidine biosynthesis</keyword>
<keyword id="KW-0378">Hydrolase</keyword>
<keyword id="KW-0486">Methionine biosynthesis</keyword>
<keyword id="KW-0511">Multifunctional enzyme</keyword>
<keyword id="KW-0521">NADP</keyword>
<keyword id="KW-0554">One-carbon metabolism</keyword>
<keyword id="KW-0560">Oxidoreductase</keyword>
<keyword id="KW-0658">Purine biosynthesis</keyword>
<feature type="chain" id="PRO_1000196759" description="Bifunctional protein FolD">
    <location>
        <begin position="1"/>
        <end position="283"/>
    </location>
</feature>
<feature type="binding site" evidence="1">
    <location>
        <begin position="166"/>
        <end position="168"/>
    </location>
    <ligand>
        <name>NADP(+)</name>
        <dbReference type="ChEBI" id="CHEBI:58349"/>
    </ligand>
</feature>
<comment type="function">
    <text evidence="1">Catalyzes the oxidation of 5,10-methylenetetrahydrofolate to 5,10-methenyltetrahydrofolate and then the hydrolysis of 5,10-methenyltetrahydrofolate to 10-formyltetrahydrofolate.</text>
</comment>
<comment type="catalytic activity">
    <reaction evidence="1">
        <text>(6R)-5,10-methylene-5,6,7,8-tetrahydrofolate + NADP(+) = (6R)-5,10-methenyltetrahydrofolate + NADPH</text>
        <dbReference type="Rhea" id="RHEA:22812"/>
        <dbReference type="ChEBI" id="CHEBI:15636"/>
        <dbReference type="ChEBI" id="CHEBI:57455"/>
        <dbReference type="ChEBI" id="CHEBI:57783"/>
        <dbReference type="ChEBI" id="CHEBI:58349"/>
        <dbReference type="EC" id="1.5.1.5"/>
    </reaction>
</comment>
<comment type="catalytic activity">
    <reaction evidence="1">
        <text>(6R)-5,10-methenyltetrahydrofolate + H2O = (6R)-10-formyltetrahydrofolate + H(+)</text>
        <dbReference type="Rhea" id="RHEA:23700"/>
        <dbReference type="ChEBI" id="CHEBI:15377"/>
        <dbReference type="ChEBI" id="CHEBI:15378"/>
        <dbReference type="ChEBI" id="CHEBI:57455"/>
        <dbReference type="ChEBI" id="CHEBI:195366"/>
        <dbReference type="EC" id="3.5.4.9"/>
    </reaction>
</comment>
<comment type="pathway">
    <text evidence="1">One-carbon metabolism; tetrahydrofolate interconversion.</text>
</comment>
<comment type="subunit">
    <text evidence="1">Homodimer.</text>
</comment>
<comment type="similarity">
    <text evidence="1">Belongs to the tetrahydrofolate dehydrogenase/cyclohydrolase family.</text>
</comment>
<organism>
    <name type="scientific">Coxiella burnetii (strain CbuK_Q154)</name>
    <name type="common">Coxiella burnetii (strain Q154)</name>
    <dbReference type="NCBI Taxonomy" id="434924"/>
    <lineage>
        <taxon>Bacteria</taxon>
        <taxon>Pseudomonadati</taxon>
        <taxon>Pseudomonadota</taxon>
        <taxon>Gammaproteobacteria</taxon>
        <taxon>Legionellales</taxon>
        <taxon>Coxiellaceae</taxon>
        <taxon>Coxiella</taxon>
    </lineage>
</organism>
<protein>
    <recommendedName>
        <fullName evidence="1">Bifunctional protein FolD</fullName>
    </recommendedName>
    <domain>
        <recommendedName>
            <fullName evidence="1">Methylenetetrahydrofolate dehydrogenase</fullName>
            <ecNumber evidence="1">1.5.1.5</ecNumber>
        </recommendedName>
    </domain>
    <domain>
        <recommendedName>
            <fullName evidence="1">Methenyltetrahydrofolate cyclohydrolase</fullName>
            <ecNumber evidence="1">3.5.4.9</ecNumber>
        </recommendedName>
    </domain>
</protein>
<accession>B6J5U6</accession>
<proteinExistence type="inferred from homology"/>
<dbReference type="EC" id="1.5.1.5" evidence="1"/>
<dbReference type="EC" id="3.5.4.9" evidence="1"/>
<dbReference type="EMBL" id="CP001020">
    <property type="protein sequence ID" value="ACJ19788.1"/>
    <property type="molecule type" value="Genomic_DNA"/>
</dbReference>
<dbReference type="RefSeq" id="WP_005769247.1">
    <property type="nucleotide sequence ID" value="NC_011528.1"/>
</dbReference>
<dbReference type="SMR" id="B6J5U6"/>
<dbReference type="KEGG" id="cbc:CbuK_0508"/>
<dbReference type="HOGENOM" id="CLU_034045_2_1_6"/>
<dbReference type="UniPathway" id="UPA00193"/>
<dbReference type="GO" id="GO:0005829">
    <property type="term" value="C:cytosol"/>
    <property type="evidence" value="ECO:0007669"/>
    <property type="project" value="TreeGrafter"/>
</dbReference>
<dbReference type="GO" id="GO:0004477">
    <property type="term" value="F:methenyltetrahydrofolate cyclohydrolase activity"/>
    <property type="evidence" value="ECO:0007669"/>
    <property type="project" value="UniProtKB-UniRule"/>
</dbReference>
<dbReference type="GO" id="GO:0004488">
    <property type="term" value="F:methylenetetrahydrofolate dehydrogenase (NADP+) activity"/>
    <property type="evidence" value="ECO:0007669"/>
    <property type="project" value="UniProtKB-UniRule"/>
</dbReference>
<dbReference type="GO" id="GO:0000105">
    <property type="term" value="P:L-histidine biosynthetic process"/>
    <property type="evidence" value="ECO:0007669"/>
    <property type="project" value="UniProtKB-KW"/>
</dbReference>
<dbReference type="GO" id="GO:0009086">
    <property type="term" value="P:methionine biosynthetic process"/>
    <property type="evidence" value="ECO:0007669"/>
    <property type="project" value="UniProtKB-KW"/>
</dbReference>
<dbReference type="GO" id="GO:0006164">
    <property type="term" value="P:purine nucleotide biosynthetic process"/>
    <property type="evidence" value="ECO:0007669"/>
    <property type="project" value="UniProtKB-KW"/>
</dbReference>
<dbReference type="GO" id="GO:0035999">
    <property type="term" value="P:tetrahydrofolate interconversion"/>
    <property type="evidence" value="ECO:0007669"/>
    <property type="project" value="UniProtKB-UniRule"/>
</dbReference>
<dbReference type="CDD" id="cd01080">
    <property type="entry name" value="NAD_bind_m-THF_DH_Cyclohyd"/>
    <property type="match status" value="1"/>
</dbReference>
<dbReference type="FunFam" id="3.40.50.720:FF:000006">
    <property type="entry name" value="Bifunctional protein FolD"/>
    <property type="match status" value="1"/>
</dbReference>
<dbReference type="FunFam" id="3.40.50.10860:FF:000005">
    <property type="entry name" value="C-1-tetrahydrofolate synthase, cytoplasmic, putative"/>
    <property type="match status" value="1"/>
</dbReference>
<dbReference type="Gene3D" id="3.40.50.10860">
    <property type="entry name" value="Leucine Dehydrogenase, chain A, domain 1"/>
    <property type="match status" value="1"/>
</dbReference>
<dbReference type="Gene3D" id="3.40.50.720">
    <property type="entry name" value="NAD(P)-binding Rossmann-like Domain"/>
    <property type="match status" value="1"/>
</dbReference>
<dbReference type="HAMAP" id="MF_01576">
    <property type="entry name" value="THF_DHG_CYH"/>
    <property type="match status" value="1"/>
</dbReference>
<dbReference type="InterPro" id="IPR046346">
    <property type="entry name" value="Aminoacid_DH-like_N_sf"/>
</dbReference>
<dbReference type="InterPro" id="IPR036291">
    <property type="entry name" value="NAD(P)-bd_dom_sf"/>
</dbReference>
<dbReference type="InterPro" id="IPR000672">
    <property type="entry name" value="THF_DH/CycHdrlase"/>
</dbReference>
<dbReference type="InterPro" id="IPR020630">
    <property type="entry name" value="THF_DH/CycHdrlase_cat_dom"/>
</dbReference>
<dbReference type="InterPro" id="IPR020867">
    <property type="entry name" value="THF_DH/CycHdrlase_CS"/>
</dbReference>
<dbReference type="InterPro" id="IPR020631">
    <property type="entry name" value="THF_DH/CycHdrlase_NAD-bd_dom"/>
</dbReference>
<dbReference type="NCBIfam" id="NF008058">
    <property type="entry name" value="PRK10792.1"/>
    <property type="match status" value="1"/>
</dbReference>
<dbReference type="NCBIfam" id="NF010783">
    <property type="entry name" value="PRK14186.1"/>
    <property type="match status" value="1"/>
</dbReference>
<dbReference type="PANTHER" id="PTHR48099:SF5">
    <property type="entry name" value="C-1-TETRAHYDROFOLATE SYNTHASE, CYTOPLASMIC"/>
    <property type="match status" value="1"/>
</dbReference>
<dbReference type="PANTHER" id="PTHR48099">
    <property type="entry name" value="C-1-TETRAHYDROFOLATE SYNTHASE, CYTOPLASMIC-RELATED"/>
    <property type="match status" value="1"/>
</dbReference>
<dbReference type="Pfam" id="PF00763">
    <property type="entry name" value="THF_DHG_CYH"/>
    <property type="match status" value="1"/>
</dbReference>
<dbReference type="Pfam" id="PF02882">
    <property type="entry name" value="THF_DHG_CYH_C"/>
    <property type="match status" value="1"/>
</dbReference>
<dbReference type="PRINTS" id="PR00085">
    <property type="entry name" value="THFDHDRGNASE"/>
</dbReference>
<dbReference type="SUPFAM" id="SSF53223">
    <property type="entry name" value="Aminoacid dehydrogenase-like, N-terminal domain"/>
    <property type="match status" value="1"/>
</dbReference>
<dbReference type="SUPFAM" id="SSF51735">
    <property type="entry name" value="NAD(P)-binding Rossmann-fold domains"/>
    <property type="match status" value="1"/>
</dbReference>
<dbReference type="PROSITE" id="PS00767">
    <property type="entry name" value="THF_DHG_CYH_2"/>
    <property type="match status" value="1"/>
</dbReference>
<gene>
    <name evidence="1" type="primary">folD</name>
    <name type="ordered locus">CbuK_0508</name>
</gene>
<reference key="1">
    <citation type="journal article" date="2009" name="Infect. Immun.">
        <title>Comparative genomics reveal extensive transposon-mediated genomic plasticity and diversity among potential effector proteins within the genus Coxiella.</title>
        <authorList>
            <person name="Beare P.A."/>
            <person name="Unsworth N."/>
            <person name="Andoh M."/>
            <person name="Voth D.E."/>
            <person name="Omsland A."/>
            <person name="Gilk S.D."/>
            <person name="Williams K.P."/>
            <person name="Sobral B.W."/>
            <person name="Kupko J.J. III"/>
            <person name="Porcella S.F."/>
            <person name="Samuel J.E."/>
            <person name="Heinzen R.A."/>
        </authorList>
    </citation>
    <scope>NUCLEOTIDE SEQUENCE [LARGE SCALE GENOMIC DNA]</scope>
    <source>
        <strain>CbuK_Q154</strain>
    </source>
</reference>
<evidence type="ECO:0000255" key="1">
    <source>
        <dbReference type="HAMAP-Rule" id="MF_01576"/>
    </source>
</evidence>
<name>FOLD_COXB1</name>